<organism>
    <name type="scientific">Cupriavidus taiwanensis (strain DSM 17343 / BCRC 17206 / CCUG 44338 / CIP 107171 / LMG 19424 / R1)</name>
    <name type="common">Ralstonia taiwanensis (strain LMG 19424)</name>
    <dbReference type="NCBI Taxonomy" id="977880"/>
    <lineage>
        <taxon>Bacteria</taxon>
        <taxon>Pseudomonadati</taxon>
        <taxon>Pseudomonadota</taxon>
        <taxon>Betaproteobacteria</taxon>
        <taxon>Burkholderiales</taxon>
        <taxon>Burkholderiaceae</taxon>
        <taxon>Cupriavidus</taxon>
    </lineage>
</organism>
<gene>
    <name evidence="1" type="primary">cbbL</name>
    <name type="ordered locus">RALTA_B1702</name>
</gene>
<comment type="function">
    <text evidence="1">RuBisCO catalyzes two reactions: the carboxylation of D-ribulose 1,5-bisphosphate, the primary event in carbon dioxide fixation, as well as the oxidative fragmentation of the pentose substrate. Both reactions occur simultaneously and in competition at the same active site.</text>
</comment>
<comment type="catalytic activity">
    <reaction evidence="1">
        <text>2 (2R)-3-phosphoglycerate + 2 H(+) = D-ribulose 1,5-bisphosphate + CO2 + H2O</text>
        <dbReference type="Rhea" id="RHEA:23124"/>
        <dbReference type="ChEBI" id="CHEBI:15377"/>
        <dbReference type="ChEBI" id="CHEBI:15378"/>
        <dbReference type="ChEBI" id="CHEBI:16526"/>
        <dbReference type="ChEBI" id="CHEBI:57870"/>
        <dbReference type="ChEBI" id="CHEBI:58272"/>
        <dbReference type="EC" id="4.1.1.39"/>
    </reaction>
</comment>
<comment type="catalytic activity">
    <reaction evidence="1">
        <text>D-ribulose 1,5-bisphosphate + O2 = 2-phosphoglycolate + (2R)-3-phosphoglycerate + 2 H(+)</text>
        <dbReference type="Rhea" id="RHEA:36631"/>
        <dbReference type="ChEBI" id="CHEBI:15378"/>
        <dbReference type="ChEBI" id="CHEBI:15379"/>
        <dbReference type="ChEBI" id="CHEBI:57870"/>
        <dbReference type="ChEBI" id="CHEBI:58033"/>
        <dbReference type="ChEBI" id="CHEBI:58272"/>
    </reaction>
</comment>
<comment type="cofactor">
    <cofactor evidence="1">
        <name>Mg(2+)</name>
        <dbReference type="ChEBI" id="CHEBI:18420"/>
    </cofactor>
    <text evidence="1">Binds 1 Mg(2+) ion per subunit.</text>
</comment>
<comment type="subunit">
    <text evidence="1">Heterohexadecamer of 8 large chains and 8 small chains.</text>
</comment>
<comment type="miscellaneous">
    <text evidence="1">The basic functional RuBisCO is composed of a large chain homodimer in a 'head-to-tail' conformation. In form I RuBisCO this homodimer is arranged in a barrel-like tetramer with the small subunits forming a tetrameric 'cap' on each end of the 'barrel'.</text>
</comment>
<comment type="similarity">
    <text evidence="1">Belongs to the RuBisCO large chain family. Type I subfamily.</text>
</comment>
<sequence>MNAPEPVQGKPRKRYDAGVMKYKEMGYWDADYEPKDTDLLALFRITPQDGVDPVEAAAAVAGESSTATWTVVWTDRLTACDMYRAKAYRVDPVPNNPEQFFCYVAYDLSLFEEGSIANLTASIIGNVFSFKPIKAARLEDMRFPVAYVKTFAGPSTGIIVERERLDKFGRPLLGATTKPKLGLSGRNYGRVVYEGLKGGLDFMKDDENINSQPFMHWRDRFLFVMDAVNKASAATGEVKGSYLNVTAGTMEEMYRRAEFAKSLGSVIIMVDLIVGWTCIQSMSNWCRQNDMILHLHRAGHGTYTRQKNHGVSFRVIAKWLRLAGVDHMHTGTAVGKLEGDPLTVQGYYNVCRDAYTRTDLTRGLFFDQDWASLRKVMPVASGGIHAGQMHQLISLFGDDVVLQFGGGTIGHPQGIQAGATANRVALEAMVLARNEGRDILNEGPEILRDAARWCGPLRAALDTWGDITFNYTPTDTSDFVPTASVA</sequence>
<dbReference type="EC" id="4.1.1.39" evidence="1"/>
<dbReference type="EMBL" id="CU633750">
    <property type="protein sequence ID" value="CAQ72293.1"/>
    <property type="molecule type" value="Genomic_DNA"/>
</dbReference>
<dbReference type="RefSeq" id="WP_012356508.1">
    <property type="nucleotide sequence ID" value="NC_010530.1"/>
</dbReference>
<dbReference type="SMR" id="B3RBL8"/>
<dbReference type="GeneID" id="29765399"/>
<dbReference type="KEGG" id="cti:RALTA_B1702"/>
<dbReference type="eggNOG" id="COG1850">
    <property type="taxonomic scope" value="Bacteria"/>
</dbReference>
<dbReference type="HOGENOM" id="CLU_031450_2_0_4"/>
<dbReference type="BioCyc" id="CTAI977880:RALTA_RS23815-MONOMER"/>
<dbReference type="Proteomes" id="UP000001692">
    <property type="component" value="Chromosome 2"/>
</dbReference>
<dbReference type="GO" id="GO:0000287">
    <property type="term" value="F:magnesium ion binding"/>
    <property type="evidence" value="ECO:0007669"/>
    <property type="project" value="UniProtKB-UniRule"/>
</dbReference>
<dbReference type="GO" id="GO:0004497">
    <property type="term" value="F:monooxygenase activity"/>
    <property type="evidence" value="ECO:0007669"/>
    <property type="project" value="UniProtKB-KW"/>
</dbReference>
<dbReference type="GO" id="GO:0016984">
    <property type="term" value="F:ribulose-bisphosphate carboxylase activity"/>
    <property type="evidence" value="ECO:0007669"/>
    <property type="project" value="UniProtKB-UniRule"/>
</dbReference>
<dbReference type="GO" id="GO:0019253">
    <property type="term" value="P:reductive pentose-phosphate cycle"/>
    <property type="evidence" value="ECO:0007669"/>
    <property type="project" value="UniProtKB-UniRule"/>
</dbReference>
<dbReference type="CDD" id="cd08212">
    <property type="entry name" value="RuBisCO_large_I"/>
    <property type="match status" value="1"/>
</dbReference>
<dbReference type="Gene3D" id="3.20.20.110">
    <property type="entry name" value="Ribulose bisphosphate carboxylase, large subunit, C-terminal domain"/>
    <property type="match status" value="1"/>
</dbReference>
<dbReference type="Gene3D" id="3.30.70.150">
    <property type="entry name" value="RuBisCO large subunit, N-terminal domain"/>
    <property type="match status" value="1"/>
</dbReference>
<dbReference type="HAMAP" id="MF_01338">
    <property type="entry name" value="RuBisCO_L_type1"/>
    <property type="match status" value="1"/>
</dbReference>
<dbReference type="InterPro" id="IPR033966">
    <property type="entry name" value="RuBisCO"/>
</dbReference>
<dbReference type="InterPro" id="IPR020878">
    <property type="entry name" value="RuBisCo_large_chain_AS"/>
</dbReference>
<dbReference type="InterPro" id="IPR000685">
    <property type="entry name" value="RuBisCO_lsu_C"/>
</dbReference>
<dbReference type="InterPro" id="IPR036376">
    <property type="entry name" value="RuBisCO_lsu_C_sf"/>
</dbReference>
<dbReference type="InterPro" id="IPR017443">
    <property type="entry name" value="RuBisCO_lsu_fd_N"/>
</dbReference>
<dbReference type="InterPro" id="IPR036422">
    <property type="entry name" value="RuBisCO_lsu_N_sf"/>
</dbReference>
<dbReference type="InterPro" id="IPR020888">
    <property type="entry name" value="RuBisCO_lsuI"/>
</dbReference>
<dbReference type="NCBIfam" id="NF003252">
    <property type="entry name" value="PRK04208.1"/>
    <property type="match status" value="1"/>
</dbReference>
<dbReference type="PANTHER" id="PTHR42704">
    <property type="entry name" value="RIBULOSE BISPHOSPHATE CARBOXYLASE"/>
    <property type="match status" value="1"/>
</dbReference>
<dbReference type="PANTHER" id="PTHR42704:SF17">
    <property type="entry name" value="RIBULOSE BISPHOSPHATE CARBOXYLASE LARGE CHAIN"/>
    <property type="match status" value="1"/>
</dbReference>
<dbReference type="Pfam" id="PF00016">
    <property type="entry name" value="RuBisCO_large"/>
    <property type="match status" value="1"/>
</dbReference>
<dbReference type="Pfam" id="PF02788">
    <property type="entry name" value="RuBisCO_large_N"/>
    <property type="match status" value="1"/>
</dbReference>
<dbReference type="SFLD" id="SFLDG01052">
    <property type="entry name" value="RuBisCO"/>
    <property type="match status" value="1"/>
</dbReference>
<dbReference type="SFLD" id="SFLDS00014">
    <property type="entry name" value="RuBisCO"/>
    <property type="match status" value="1"/>
</dbReference>
<dbReference type="SFLD" id="SFLDG00301">
    <property type="entry name" value="RuBisCO-like_proteins"/>
    <property type="match status" value="1"/>
</dbReference>
<dbReference type="SUPFAM" id="SSF51649">
    <property type="entry name" value="RuBisCo, C-terminal domain"/>
    <property type="match status" value="1"/>
</dbReference>
<dbReference type="SUPFAM" id="SSF54966">
    <property type="entry name" value="RuBisCO, large subunit, small (N-terminal) domain"/>
    <property type="match status" value="1"/>
</dbReference>
<dbReference type="PROSITE" id="PS00157">
    <property type="entry name" value="RUBISCO_LARGE"/>
    <property type="match status" value="1"/>
</dbReference>
<reference key="1">
    <citation type="journal article" date="2008" name="Genome Res.">
        <title>Genome sequence of the beta-rhizobium Cupriavidus taiwanensis and comparative genomics of rhizobia.</title>
        <authorList>
            <person name="Amadou C."/>
            <person name="Pascal G."/>
            <person name="Mangenot S."/>
            <person name="Glew M."/>
            <person name="Bontemps C."/>
            <person name="Capela D."/>
            <person name="Carrere S."/>
            <person name="Cruveiller S."/>
            <person name="Dossat C."/>
            <person name="Lajus A."/>
            <person name="Marchetti M."/>
            <person name="Poinsot V."/>
            <person name="Rouy Z."/>
            <person name="Servin B."/>
            <person name="Saad M."/>
            <person name="Schenowitz C."/>
            <person name="Barbe V."/>
            <person name="Batut J."/>
            <person name="Medigue C."/>
            <person name="Masson-Boivin C."/>
        </authorList>
    </citation>
    <scope>NUCLEOTIDE SEQUENCE [LARGE SCALE GENOMIC DNA]</scope>
    <source>
        <strain>DSM 17343 / BCRC 17206 / CCUG 44338 / CIP 107171 / LMG 19424 / R1</strain>
    </source>
</reference>
<protein>
    <recommendedName>
        <fullName evidence="1">Ribulose bisphosphate carboxylase large chain</fullName>
        <shortName evidence="1">RuBisCO large subunit</shortName>
        <ecNumber evidence="1">4.1.1.39</ecNumber>
    </recommendedName>
</protein>
<keyword id="KW-0113">Calvin cycle</keyword>
<keyword id="KW-0120">Carbon dioxide fixation</keyword>
<keyword id="KW-0456">Lyase</keyword>
<keyword id="KW-0460">Magnesium</keyword>
<keyword id="KW-0479">Metal-binding</keyword>
<keyword id="KW-0503">Monooxygenase</keyword>
<keyword id="KW-0560">Oxidoreductase</keyword>
<accession>B3RBL8</accession>
<proteinExistence type="inferred from homology"/>
<feature type="chain" id="PRO_1000142748" description="Ribulose bisphosphate carboxylase large chain">
    <location>
        <begin position="1"/>
        <end position="486"/>
    </location>
</feature>
<feature type="active site" description="Proton acceptor" evidence="1">
    <location>
        <position position="178"/>
    </location>
</feature>
<feature type="active site" description="Proton acceptor" evidence="1">
    <location>
        <position position="296"/>
    </location>
</feature>
<feature type="binding site" description="in homodimeric partner" evidence="1">
    <location>
        <position position="126"/>
    </location>
    <ligand>
        <name>substrate</name>
    </ligand>
</feature>
<feature type="binding site" evidence="1">
    <location>
        <position position="176"/>
    </location>
    <ligand>
        <name>substrate</name>
    </ligand>
</feature>
<feature type="binding site" evidence="1">
    <location>
        <position position="180"/>
    </location>
    <ligand>
        <name>substrate</name>
    </ligand>
</feature>
<feature type="binding site" description="via carbamate group" evidence="1">
    <location>
        <position position="204"/>
    </location>
    <ligand>
        <name>Mg(2+)</name>
        <dbReference type="ChEBI" id="CHEBI:18420"/>
    </ligand>
</feature>
<feature type="binding site" evidence="1">
    <location>
        <position position="206"/>
    </location>
    <ligand>
        <name>Mg(2+)</name>
        <dbReference type="ChEBI" id="CHEBI:18420"/>
    </ligand>
</feature>
<feature type="binding site" evidence="1">
    <location>
        <position position="207"/>
    </location>
    <ligand>
        <name>Mg(2+)</name>
        <dbReference type="ChEBI" id="CHEBI:18420"/>
    </ligand>
</feature>
<feature type="binding site" evidence="1">
    <location>
        <position position="297"/>
    </location>
    <ligand>
        <name>substrate</name>
    </ligand>
</feature>
<feature type="binding site" evidence="1">
    <location>
        <position position="329"/>
    </location>
    <ligand>
        <name>substrate</name>
    </ligand>
</feature>
<feature type="binding site" evidence="1">
    <location>
        <position position="381"/>
    </location>
    <ligand>
        <name>substrate</name>
    </ligand>
</feature>
<feature type="site" description="Transition state stabilizer" evidence="1">
    <location>
        <position position="336"/>
    </location>
</feature>
<feature type="modified residue" description="N6-carboxylysine" evidence="1">
    <location>
        <position position="204"/>
    </location>
</feature>
<name>RBL_CUPTR</name>
<evidence type="ECO:0000255" key="1">
    <source>
        <dbReference type="HAMAP-Rule" id="MF_01338"/>
    </source>
</evidence>